<gene>
    <name evidence="1" type="primary">rpmJ</name>
    <name type="ordered locus">Arad_3772</name>
</gene>
<keyword id="KW-0687">Ribonucleoprotein</keyword>
<keyword id="KW-0689">Ribosomal protein</keyword>
<reference key="1">
    <citation type="journal article" date="2009" name="J. Bacteriol.">
        <title>Genome sequences of three Agrobacterium biovars help elucidate the evolution of multichromosome genomes in bacteria.</title>
        <authorList>
            <person name="Slater S.C."/>
            <person name="Goldman B.S."/>
            <person name="Goodner B."/>
            <person name="Setubal J.C."/>
            <person name="Farrand S.K."/>
            <person name="Nester E.W."/>
            <person name="Burr T.J."/>
            <person name="Banta L."/>
            <person name="Dickerman A.W."/>
            <person name="Paulsen I."/>
            <person name="Otten L."/>
            <person name="Suen G."/>
            <person name="Welch R."/>
            <person name="Almeida N.F."/>
            <person name="Arnold F."/>
            <person name="Burton O.T."/>
            <person name="Du Z."/>
            <person name="Ewing A."/>
            <person name="Godsy E."/>
            <person name="Heisel S."/>
            <person name="Houmiel K.L."/>
            <person name="Jhaveri J."/>
            <person name="Lu J."/>
            <person name="Miller N.M."/>
            <person name="Norton S."/>
            <person name="Chen Q."/>
            <person name="Phoolcharoen W."/>
            <person name="Ohlin V."/>
            <person name="Ondrusek D."/>
            <person name="Pride N."/>
            <person name="Stricklin S.L."/>
            <person name="Sun J."/>
            <person name="Wheeler C."/>
            <person name="Wilson L."/>
            <person name="Zhu H."/>
            <person name="Wood D.W."/>
        </authorList>
    </citation>
    <scope>NUCLEOTIDE SEQUENCE [LARGE SCALE GENOMIC DNA]</scope>
    <source>
        <strain>K84 / ATCC BAA-868</strain>
    </source>
</reference>
<dbReference type="EMBL" id="CP000628">
    <property type="protein sequence ID" value="ACM27643.1"/>
    <property type="molecule type" value="Genomic_DNA"/>
</dbReference>
<dbReference type="SMR" id="B9J9P2"/>
<dbReference type="STRING" id="311403.Arad_3772"/>
<dbReference type="KEGG" id="ara:Arad_3772"/>
<dbReference type="eggNOG" id="COG0257">
    <property type="taxonomic scope" value="Bacteria"/>
</dbReference>
<dbReference type="HOGENOM" id="CLU_135723_3_0_5"/>
<dbReference type="Proteomes" id="UP000001600">
    <property type="component" value="Chromosome 1"/>
</dbReference>
<dbReference type="GO" id="GO:1990904">
    <property type="term" value="C:ribonucleoprotein complex"/>
    <property type="evidence" value="ECO:0007669"/>
    <property type="project" value="UniProtKB-KW"/>
</dbReference>
<dbReference type="GO" id="GO:0005840">
    <property type="term" value="C:ribosome"/>
    <property type="evidence" value="ECO:0007669"/>
    <property type="project" value="UniProtKB-KW"/>
</dbReference>
<dbReference type="GO" id="GO:0003735">
    <property type="term" value="F:structural constituent of ribosome"/>
    <property type="evidence" value="ECO:0007669"/>
    <property type="project" value="InterPro"/>
</dbReference>
<dbReference type="GO" id="GO:0006412">
    <property type="term" value="P:translation"/>
    <property type="evidence" value="ECO:0007669"/>
    <property type="project" value="UniProtKB-UniRule"/>
</dbReference>
<dbReference type="HAMAP" id="MF_00251">
    <property type="entry name" value="Ribosomal_bL36"/>
    <property type="match status" value="1"/>
</dbReference>
<dbReference type="InterPro" id="IPR000473">
    <property type="entry name" value="Ribosomal_bL36"/>
</dbReference>
<dbReference type="InterPro" id="IPR035977">
    <property type="entry name" value="Ribosomal_bL36_sp"/>
</dbReference>
<dbReference type="InterPro" id="IPR047621">
    <property type="entry name" value="Ribosomal_L36_bact"/>
</dbReference>
<dbReference type="NCBIfam" id="NF002021">
    <property type="entry name" value="PRK00831.1"/>
    <property type="match status" value="1"/>
</dbReference>
<dbReference type="PANTHER" id="PTHR47781">
    <property type="entry name" value="50S RIBOSOMAL PROTEIN L36 2"/>
    <property type="match status" value="1"/>
</dbReference>
<dbReference type="PANTHER" id="PTHR47781:SF1">
    <property type="entry name" value="LARGE RIBOSOMAL SUBUNIT PROTEIN BL36B"/>
    <property type="match status" value="1"/>
</dbReference>
<dbReference type="Pfam" id="PF00444">
    <property type="entry name" value="Ribosomal_L36"/>
    <property type="match status" value="1"/>
</dbReference>
<dbReference type="SUPFAM" id="SSF57840">
    <property type="entry name" value="Ribosomal protein L36"/>
    <property type="match status" value="1"/>
</dbReference>
<dbReference type="PROSITE" id="PS00828">
    <property type="entry name" value="RIBOSOMAL_L36"/>
    <property type="match status" value="1"/>
</dbReference>
<feature type="chain" id="PRO_1000196155" description="Large ribosomal subunit protein bL36">
    <location>
        <begin position="1"/>
        <end position="41"/>
    </location>
</feature>
<proteinExistence type="inferred from homology"/>
<organism>
    <name type="scientific">Rhizobium rhizogenes (strain K84 / ATCC BAA-868)</name>
    <name type="common">Agrobacterium radiobacter</name>
    <dbReference type="NCBI Taxonomy" id="311403"/>
    <lineage>
        <taxon>Bacteria</taxon>
        <taxon>Pseudomonadati</taxon>
        <taxon>Pseudomonadota</taxon>
        <taxon>Alphaproteobacteria</taxon>
        <taxon>Hyphomicrobiales</taxon>
        <taxon>Rhizobiaceae</taxon>
        <taxon>Rhizobium/Agrobacterium group</taxon>
        <taxon>Rhizobium</taxon>
    </lineage>
</organism>
<evidence type="ECO:0000255" key="1">
    <source>
        <dbReference type="HAMAP-Rule" id="MF_00251"/>
    </source>
</evidence>
<evidence type="ECO:0000305" key="2"/>
<comment type="similarity">
    <text evidence="1">Belongs to the bacterial ribosomal protein bL36 family.</text>
</comment>
<sequence>MKIKNSLKSLKARHRDNRLVRRKGRMYIINKLNPRFKARQG</sequence>
<protein>
    <recommendedName>
        <fullName evidence="1">Large ribosomal subunit protein bL36</fullName>
    </recommendedName>
    <alternativeName>
        <fullName evidence="2">50S ribosomal protein L36</fullName>
    </alternativeName>
</protein>
<name>RL36_RHIR8</name>
<accession>B9J9P2</accession>